<comment type="function">
    <text evidence="2">Thiol-specific peroxidase that catalyzes the reduction of hydrogen peroxide and organic hydroperoxides to water and alcohols, respectively. Plays a role in cell protection against oxidative stress by detoxifying peroxides.</text>
</comment>
<comment type="catalytic activity">
    <reaction evidence="2">
        <text>a hydroperoxide + [thioredoxin]-dithiol = an alcohol + [thioredoxin]-disulfide + H2O</text>
        <dbReference type="Rhea" id="RHEA:62620"/>
        <dbReference type="Rhea" id="RHEA-COMP:10698"/>
        <dbReference type="Rhea" id="RHEA-COMP:10700"/>
        <dbReference type="ChEBI" id="CHEBI:15377"/>
        <dbReference type="ChEBI" id="CHEBI:29950"/>
        <dbReference type="ChEBI" id="CHEBI:30879"/>
        <dbReference type="ChEBI" id="CHEBI:35924"/>
        <dbReference type="ChEBI" id="CHEBI:50058"/>
        <dbReference type="EC" id="1.11.1.24"/>
    </reaction>
</comment>
<comment type="subunit">
    <text evidence="2">Monomer.</text>
</comment>
<comment type="subcellular location">
    <subcellularLocation>
        <location evidence="2">Plastid</location>
        <location evidence="2">Chloroplast thylakoid lumen</location>
    </subcellularLocation>
</comment>
<comment type="induction">
    <text evidence="6">Up-regulated by NaCl, mannitol, low temperature, H(2)O(2), methyl viologen, and abscisic acid (ABA).</text>
</comment>
<comment type="miscellaneous">
    <text evidence="1">The active site is a conserved redox-active cysteine residue, the peroxidatic cysteine (C(P)), which makes the nucleophilic attack on the peroxide substrate. The peroxide oxidizes the C(P)-SH to cysteine sulfenic acid (C(P)-SOH), which then reacts with another cysteine residue, the resolving cysteine (C(R)), to form a disulfide bridge. The disulfide is subsequently reduced by an appropriate electron donor to complete the catalytic cycle. In this atypical 2-Cys peroxiredoxin, C(R) is present in the same subunit to form an intramolecular disulfide. The disulfide is subsequently reduced by thioredoxin.</text>
</comment>
<comment type="similarity">
    <text evidence="7">Belongs to the peroxiredoxin family. BCP/PrxQ subfamily.</text>
</comment>
<evidence type="ECO:0000250" key="1">
    <source>
        <dbReference type="UniProtKB" id="P0AE52"/>
    </source>
</evidence>
<evidence type="ECO:0000250" key="2">
    <source>
        <dbReference type="UniProtKB" id="Q9LU86"/>
    </source>
</evidence>
<evidence type="ECO:0000255" key="3"/>
<evidence type="ECO:0000255" key="4">
    <source>
        <dbReference type="PROSITE-ProRule" id="PRU00691"/>
    </source>
</evidence>
<evidence type="ECO:0000256" key="5">
    <source>
        <dbReference type="SAM" id="MobiDB-lite"/>
    </source>
</evidence>
<evidence type="ECO:0000269" key="6">
    <source ref="1"/>
</evidence>
<evidence type="ECO:0000305" key="7"/>
<reference key="1">
    <citation type="journal article" date="2004" name="Plant Sci.">
        <title>Molecular cloning and characterization of a stress-induced peroxiredoxin Q gene in halophyte Suaeda salsa.</title>
        <authorList>
            <person name="Guo X.-L."/>
            <person name="Cao Y.-R."/>
            <person name="Cao Z.-Y."/>
            <person name="Zhao Y.-X."/>
            <person name="Zhang H."/>
        </authorList>
        <dbReference type="AGRICOLA" id="IND43645556"/>
    </citation>
    <scope>NUCLEOTIDE SEQUENCE [MRNA]</scope>
    <scope>INDUCTION</scope>
</reference>
<dbReference type="EC" id="1.11.1.24" evidence="2"/>
<dbReference type="EMBL" id="AY373447">
    <property type="protein sequence ID" value="AAQ67661.1"/>
    <property type="molecule type" value="mRNA"/>
</dbReference>
<dbReference type="SMR" id="Q6UBI3"/>
<dbReference type="PeroxiBase" id="4306">
    <property type="entry name" value="SsaPrxQ"/>
</dbReference>
<dbReference type="GO" id="GO:0009543">
    <property type="term" value="C:chloroplast thylakoid lumen"/>
    <property type="evidence" value="ECO:0007669"/>
    <property type="project" value="UniProtKB-SubCell"/>
</dbReference>
<dbReference type="GO" id="GO:0009535">
    <property type="term" value="C:chloroplast thylakoid membrane"/>
    <property type="evidence" value="ECO:0007669"/>
    <property type="project" value="TreeGrafter"/>
</dbReference>
<dbReference type="GO" id="GO:0008379">
    <property type="term" value="F:thioredoxin peroxidase activity"/>
    <property type="evidence" value="ECO:0007669"/>
    <property type="project" value="TreeGrafter"/>
</dbReference>
<dbReference type="GO" id="GO:0045454">
    <property type="term" value="P:cell redox homeostasis"/>
    <property type="evidence" value="ECO:0007669"/>
    <property type="project" value="TreeGrafter"/>
</dbReference>
<dbReference type="GO" id="GO:0034599">
    <property type="term" value="P:cellular response to oxidative stress"/>
    <property type="evidence" value="ECO:0007669"/>
    <property type="project" value="TreeGrafter"/>
</dbReference>
<dbReference type="CDD" id="cd03017">
    <property type="entry name" value="PRX_BCP"/>
    <property type="match status" value="1"/>
</dbReference>
<dbReference type="FunFam" id="3.40.30.10:FF:000122">
    <property type="entry name" value="Peroxiredoxin Q chloroplastic"/>
    <property type="match status" value="1"/>
</dbReference>
<dbReference type="Gene3D" id="3.40.30.10">
    <property type="entry name" value="Glutaredoxin"/>
    <property type="match status" value="1"/>
</dbReference>
<dbReference type="InterPro" id="IPR000866">
    <property type="entry name" value="AhpC/TSA"/>
</dbReference>
<dbReference type="InterPro" id="IPR050924">
    <property type="entry name" value="Peroxiredoxin_BCP/PrxQ"/>
</dbReference>
<dbReference type="InterPro" id="IPR036249">
    <property type="entry name" value="Thioredoxin-like_sf"/>
</dbReference>
<dbReference type="InterPro" id="IPR013766">
    <property type="entry name" value="Thioredoxin_domain"/>
</dbReference>
<dbReference type="PANTHER" id="PTHR42801:SF4">
    <property type="entry name" value="AHPC_TSA FAMILY PROTEIN"/>
    <property type="match status" value="1"/>
</dbReference>
<dbReference type="PANTHER" id="PTHR42801">
    <property type="entry name" value="THIOREDOXIN-DEPENDENT PEROXIDE REDUCTASE"/>
    <property type="match status" value="1"/>
</dbReference>
<dbReference type="Pfam" id="PF00578">
    <property type="entry name" value="AhpC-TSA"/>
    <property type="match status" value="1"/>
</dbReference>
<dbReference type="SUPFAM" id="SSF52833">
    <property type="entry name" value="Thioredoxin-like"/>
    <property type="match status" value="1"/>
</dbReference>
<dbReference type="PROSITE" id="PS51352">
    <property type="entry name" value="THIOREDOXIN_2"/>
    <property type="match status" value="1"/>
</dbReference>
<proteinExistence type="evidence at transcript level"/>
<name>PERQ_SUASA</name>
<feature type="transit peptide" description="Chloroplast" evidence="3">
    <location>
        <begin position="1"/>
        <end position="64"/>
    </location>
</feature>
<feature type="chain" id="PRO_0000285113" description="Peroxiredoxin Q, chloroplastic">
    <location>
        <begin position="65"/>
        <end position="214"/>
    </location>
</feature>
<feature type="domain" description="Thioredoxin" evidence="4">
    <location>
        <begin position="67"/>
        <end position="214"/>
    </location>
</feature>
<feature type="region of interest" description="Disordered" evidence="5">
    <location>
        <begin position="1"/>
        <end position="27"/>
    </location>
</feature>
<feature type="active site" description="Cysteine sulfenic acid (-SOH) intermediate" evidence="1">
    <location>
        <position position="109"/>
    </location>
</feature>
<feature type="disulfide bond" description="Redox-active" evidence="1">
    <location>
        <begin position="109"/>
        <end position="114"/>
    </location>
</feature>
<sequence>MATLSLPNHSPTFALPSQTPKPHSSQNLSIISKSAHSQFCGIKLSHSSSLSPPLYPRSYKASIVAKVSEGSMPPAFTLKDQDGKNVSLSKFKGKPVVVYFYPADETPGCTKQACAFRDSYEKFKKAGAEVIGISGDDSSSHKAFKQKYKLPYTLLSDEGNKVRKDWGVPSDLFGALPGRQTYVLDRNGVVRLVYNNQFQPEKHIDETLKFLQSL</sequence>
<keyword id="KW-0049">Antioxidant</keyword>
<keyword id="KW-0150">Chloroplast</keyword>
<keyword id="KW-1015">Disulfide bond</keyword>
<keyword id="KW-0560">Oxidoreductase</keyword>
<keyword id="KW-0575">Peroxidase</keyword>
<keyword id="KW-0934">Plastid</keyword>
<keyword id="KW-0676">Redox-active center</keyword>
<keyword id="KW-0793">Thylakoid</keyword>
<keyword id="KW-0809">Transit peptide</keyword>
<gene>
    <name type="primary">PRXQ</name>
</gene>
<protein>
    <recommendedName>
        <fullName>Peroxiredoxin Q, chloroplastic</fullName>
        <ecNumber evidence="2">1.11.1.24</ecNumber>
    </recommendedName>
    <alternativeName>
        <fullName>Thioredoxin peroxidase</fullName>
    </alternativeName>
    <alternativeName>
        <fullName evidence="7">Thioredoxin-dependent peroxiredoxin Q</fullName>
    </alternativeName>
</protein>
<organism>
    <name type="scientific">Suaeda salsa</name>
    <name type="common">Seepweed</name>
    <name type="synonym">Chenopodium salsum</name>
    <dbReference type="NCBI Taxonomy" id="126914"/>
    <lineage>
        <taxon>Eukaryota</taxon>
        <taxon>Viridiplantae</taxon>
        <taxon>Streptophyta</taxon>
        <taxon>Embryophyta</taxon>
        <taxon>Tracheophyta</taxon>
        <taxon>Spermatophyta</taxon>
        <taxon>Magnoliopsida</taxon>
        <taxon>eudicotyledons</taxon>
        <taxon>Gunneridae</taxon>
        <taxon>Pentapetalae</taxon>
        <taxon>Caryophyllales</taxon>
        <taxon>Chenopodiaceae</taxon>
        <taxon>Suaedoideae</taxon>
        <taxon>Suaeda</taxon>
    </lineage>
</organism>
<accession>Q6UBI3</accession>